<organism>
    <name type="scientific">Rattus norvegicus</name>
    <name type="common">Rat</name>
    <dbReference type="NCBI Taxonomy" id="10116"/>
    <lineage>
        <taxon>Eukaryota</taxon>
        <taxon>Metazoa</taxon>
        <taxon>Chordata</taxon>
        <taxon>Craniata</taxon>
        <taxon>Vertebrata</taxon>
        <taxon>Euteleostomi</taxon>
        <taxon>Mammalia</taxon>
        <taxon>Eutheria</taxon>
        <taxon>Euarchontoglires</taxon>
        <taxon>Glires</taxon>
        <taxon>Rodentia</taxon>
        <taxon>Myomorpha</taxon>
        <taxon>Muroidea</taxon>
        <taxon>Muridae</taxon>
        <taxon>Murinae</taxon>
        <taxon>Rattus</taxon>
    </lineage>
</organism>
<dbReference type="EMBL" id="BC103628">
    <property type="protein sequence ID" value="AAI03629.1"/>
    <property type="molecule type" value="mRNA"/>
</dbReference>
<dbReference type="RefSeq" id="NP_001028240.3">
    <property type="nucleotide sequence ID" value="NM_001033068.3"/>
</dbReference>
<dbReference type="SMR" id="Q3ZAV8"/>
<dbReference type="BioGRID" id="262648">
    <property type="interactions" value="1"/>
</dbReference>
<dbReference type="FunCoup" id="Q3ZAV8">
    <property type="interactions" value="3742"/>
</dbReference>
<dbReference type="IntAct" id="Q3ZAV8">
    <property type="interactions" value="1"/>
</dbReference>
<dbReference type="STRING" id="10116.ENSRNOP00000006345"/>
<dbReference type="GlyGen" id="Q3ZAV8">
    <property type="glycosylation" value="1 site"/>
</dbReference>
<dbReference type="iPTMnet" id="Q3ZAV8"/>
<dbReference type="PhosphoSitePlus" id="Q3ZAV8"/>
<dbReference type="jPOST" id="Q3ZAV8"/>
<dbReference type="PaxDb" id="10116-ENSRNOP00000033608"/>
<dbReference type="GeneID" id="361399"/>
<dbReference type="KEGG" id="rno:361399"/>
<dbReference type="UCSC" id="RGD:1562009">
    <property type="organism name" value="rat"/>
</dbReference>
<dbReference type="AGR" id="RGD:1562009"/>
<dbReference type="CTD" id="23644"/>
<dbReference type="RGD" id="1562009">
    <property type="gene designation" value="Edc4"/>
</dbReference>
<dbReference type="VEuPathDB" id="HostDB:ENSRNOG00000024025"/>
<dbReference type="eggNOG" id="KOG1916">
    <property type="taxonomic scope" value="Eukaryota"/>
</dbReference>
<dbReference type="HOGENOM" id="CLU_005166_0_0_1"/>
<dbReference type="InParanoid" id="Q3ZAV8"/>
<dbReference type="OrthoDB" id="58558at9989"/>
<dbReference type="Reactome" id="R-RNO-430039">
    <property type="pathway name" value="mRNA decay by 5' to 3' exoribonuclease"/>
</dbReference>
<dbReference type="PRO" id="PR:Q3ZAV8"/>
<dbReference type="Proteomes" id="UP000002494">
    <property type="component" value="Chromosome 19"/>
</dbReference>
<dbReference type="Bgee" id="ENSRNOG00000024025">
    <property type="expression patterns" value="Expressed in pancreas and 20 other cell types or tissues"/>
</dbReference>
<dbReference type="ExpressionAtlas" id="Q3ZAV8">
    <property type="expression patterns" value="baseline and differential"/>
</dbReference>
<dbReference type="GO" id="GO:0005634">
    <property type="term" value="C:nucleus"/>
    <property type="evidence" value="ECO:0000266"/>
    <property type="project" value="RGD"/>
</dbReference>
<dbReference type="GO" id="GO:0000932">
    <property type="term" value="C:P-body"/>
    <property type="evidence" value="ECO:0000266"/>
    <property type="project" value="RGD"/>
</dbReference>
<dbReference type="GO" id="GO:0031087">
    <property type="term" value="P:deadenylation-independent decapping of nuclear-transcribed mRNA"/>
    <property type="evidence" value="ECO:0000318"/>
    <property type="project" value="GO_Central"/>
</dbReference>
<dbReference type="FunFam" id="1.10.220.100:FF:000001">
    <property type="entry name" value="Enhancer of mRNA-decapping protein 4"/>
    <property type="match status" value="1"/>
</dbReference>
<dbReference type="FunFam" id="2.130.10.10:FF:000138">
    <property type="entry name" value="Enhancer of mRNA-decapping protein 4"/>
    <property type="match status" value="1"/>
</dbReference>
<dbReference type="Gene3D" id="6.10.140.270">
    <property type="match status" value="1"/>
</dbReference>
<dbReference type="Gene3D" id="1.10.220.100">
    <property type="entry name" value="conserved c-terminal region of ge- 1"/>
    <property type="match status" value="1"/>
</dbReference>
<dbReference type="Gene3D" id="2.130.10.10">
    <property type="entry name" value="YVTN repeat-like/Quinoprotein amine dehydrogenase"/>
    <property type="match status" value="1"/>
</dbReference>
<dbReference type="InterPro" id="IPR045152">
    <property type="entry name" value="EDC4-like"/>
</dbReference>
<dbReference type="InterPro" id="IPR049404">
    <property type="entry name" value="EDC4_C"/>
</dbReference>
<dbReference type="InterPro" id="IPR044938">
    <property type="entry name" value="EDC4_C_sf"/>
</dbReference>
<dbReference type="InterPro" id="IPR032401">
    <property type="entry name" value="EDC4_WD40"/>
</dbReference>
<dbReference type="InterPro" id="IPR015943">
    <property type="entry name" value="WD40/YVTN_repeat-like_dom_sf"/>
</dbReference>
<dbReference type="InterPro" id="IPR036322">
    <property type="entry name" value="WD40_repeat_dom_sf"/>
</dbReference>
<dbReference type="InterPro" id="IPR001680">
    <property type="entry name" value="WD40_rpt"/>
</dbReference>
<dbReference type="PANTHER" id="PTHR15598">
    <property type="entry name" value="ENHANCER OF MRNA-DECAPPING PROTEIN 4"/>
    <property type="match status" value="1"/>
</dbReference>
<dbReference type="PANTHER" id="PTHR15598:SF5">
    <property type="entry name" value="ENHANCER OF MRNA-DECAPPING PROTEIN 4"/>
    <property type="match status" value="1"/>
</dbReference>
<dbReference type="Pfam" id="PF21289">
    <property type="entry name" value="EDC4_C"/>
    <property type="match status" value="1"/>
</dbReference>
<dbReference type="Pfam" id="PF16529">
    <property type="entry name" value="Ge1_WD40"/>
    <property type="match status" value="1"/>
</dbReference>
<dbReference type="SMART" id="SM00320">
    <property type="entry name" value="WD40"/>
    <property type="match status" value="3"/>
</dbReference>
<dbReference type="SUPFAM" id="SSF50978">
    <property type="entry name" value="WD40 repeat-like"/>
    <property type="match status" value="1"/>
</dbReference>
<dbReference type="PROSITE" id="PS50082">
    <property type="entry name" value="WD_REPEATS_2"/>
    <property type="match status" value="1"/>
</dbReference>
<dbReference type="PROSITE" id="PS50294">
    <property type="entry name" value="WD_REPEATS_REGION"/>
    <property type="match status" value="1"/>
</dbReference>
<name>EDC4_RAT</name>
<proteinExistence type="evidence at protein level"/>
<keyword id="KW-0007">Acetylation</keyword>
<keyword id="KW-0175">Coiled coil</keyword>
<keyword id="KW-0963">Cytoplasm</keyword>
<keyword id="KW-0539">Nucleus</keyword>
<keyword id="KW-0597">Phosphoprotein</keyword>
<keyword id="KW-1185">Reference proteome</keyword>
<keyword id="KW-0677">Repeat</keyword>
<keyword id="KW-0853">WD repeat</keyword>
<evidence type="ECO:0000250" key="1">
    <source>
        <dbReference type="UniProtKB" id="Q3UJB9"/>
    </source>
</evidence>
<evidence type="ECO:0000250" key="2">
    <source>
        <dbReference type="UniProtKB" id="Q6P2E9"/>
    </source>
</evidence>
<evidence type="ECO:0000255" key="3"/>
<evidence type="ECO:0000256" key="4">
    <source>
        <dbReference type="SAM" id="MobiDB-lite"/>
    </source>
</evidence>
<evidence type="ECO:0000305" key="5"/>
<evidence type="ECO:0007744" key="6">
    <source>
    </source>
</evidence>
<gene>
    <name type="primary">Edc4</name>
</gene>
<reference key="1">
    <citation type="journal article" date="2004" name="Genome Res.">
        <title>The status, quality, and expansion of the NIH full-length cDNA project: the Mammalian Gene Collection (MGC).</title>
        <authorList>
            <consortium name="The MGC Project Team"/>
        </authorList>
    </citation>
    <scope>NUCLEOTIDE SEQUENCE [LARGE SCALE MRNA]</scope>
    <source>
        <tissue>Prostate</tissue>
    </source>
</reference>
<reference key="2">
    <citation type="journal article" date="2012" name="Nat. Commun.">
        <title>Quantitative maps of protein phosphorylation sites across 14 different rat organs and tissues.</title>
        <authorList>
            <person name="Lundby A."/>
            <person name="Secher A."/>
            <person name="Lage K."/>
            <person name="Nordsborg N.B."/>
            <person name="Dmytriyev A."/>
            <person name="Lundby C."/>
            <person name="Olsen J.V."/>
        </authorList>
    </citation>
    <scope>PHOSPHORYLATION [LARGE SCALE ANALYSIS] AT SER-734 AND SER-850</scope>
    <scope>IDENTIFICATION BY MASS SPECTROMETRY [LARGE SCALE ANALYSIS]</scope>
</reference>
<sequence length="1407" mass="152596">MASCASIDIEDATQHLRDILKLDRPAGGSNVESQRPSSAYNGDLNGLLVPDPLSSGDGNSTSKPGIRTMPPINLQEKQVICLSGDDSSTCIGILAKEVEIVASSDSSISSKARGSNKVKIQPVAKYDWEQKYYYGNLIAVSNSFLAYAIRAANNGSAMVRVISVSTSERTLLKGFTGSVADLAFAHLNSPQLACLDEAGDLFVWRLALVKGKIQEEILVHIRQPEGTPLNHFRRIIWCPFIPEESEDCCEESSPTVALLHEDRAEVWDLDMLRSSHSTWPVDVSQIKQGFIVVKGHSTCLSEGALSPDGTVLATASHDGFVKFWQIYIEGQDEPRCLHEWKPHDGRPLSCLLFCDNHKKQDPEVPFWRFLITGADQNRELKMWCTVSWTCLQTIRFSPDIFSSVSVPPSLKVCLDLSAEYLILSDVQRKVLYVMELLQNQDEGRACFSSISEFLLTHPVLSFGIQVVSRCRLRHTEVLPAEEESDSLGTESSHGAGTLESAAGVLIKLFCVHTKALQDVQIRFQPQLNPDVVAPLSTHTAHEDFTFGESRPELGSEGLASAPHGSQPDLRRIVELPAPADFLSLSSETKPKLMTPDAFMTPTASLQQISASPSSSSSSSSSSSSSSSSSSSSSLTAVSAVSSSSAMDPSLPSRPPEELTLSPKLQLDGSLTISSSSSLQASPRSLLPGLLPGPADKLIPKGPGQVSSGTSALSLDLQEVEPLGLPQASPSRTRSPDVISSASTALSQDIPEIASEALSRGFGSSVPEGLIEPDSMASAASALHLLSPRPRQGPELSSQLGLDGGPGDGDRHSTPSLLEAALTQEVATSDSQVWPTAPDITRETCSTLTESPRNGLQEKHKSLAFHRPPYHLLQQHDSQDTSAEQSDHDDEVASLASASGGFGSKIPTPRLPAKDWKTKGSPRTSPKLKRKSKKDDGDSAVGSRLTEHQVVEPPEDWPALIWQQQRELAELWHNQEELLQRLCAQLEGLQSTVTDHVERALETRHEQEQRRLERALAEGQQRGGQLQEQLTQQLSQALSSAVAGRLERSIRDEIKKTVPPCVSRSLEPVAGQLSNSVATKLTAVEGSMKENISKLLKSKNLTDAIARAAADTLQGPMQAAYREAFQSVVLPAFEKSCQAMFQQINDSFRLGTQEYLQQLDSHMKSRKAREQEAREPVLAQLRGLVSTLQNATEQMAATVSSSVRAEVQHQLHVAVGSLQESILAQVQRIVKGEVSVALKEQQATVTSSIMQAMRSAAGTPVPSAHLDCQAQQAHILQLLQQGHLNQAFQQALTAADLNLVLYVCETVDPAQVFGQPPCPLSQPVLLSLIQQLASDLGTRSDLKLSYLEEAVMHLDHSDPITRDHMGSVMAQVRQKLFQFLQADPHNSLGKAARRLSLMLHGLVTPSLP</sequence>
<protein>
    <recommendedName>
        <fullName>Enhancer of mRNA-decapping protein 4</fullName>
    </recommendedName>
</protein>
<accession>Q3ZAV8</accession>
<feature type="initiator methionine" description="Removed" evidence="2">
    <location>
        <position position="1"/>
    </location>
</feature>
<feature type="chain" id="PRO_0000278964" description="Enhancer of mRNA-decapping protein 4">
    <location>
        <begin position="2"/>
        <end position="1407"/>
    </location>
</feature>
<feature type="repeat" description="WD 1">
    <location>
        <begin position="174"/>
        <end position="214"/>
    </location>
</feature>
<feature type="repeat" description="WD 2">
    <location>
        <begin position="230"/>
        <end position="277"/>
    </location>
</feature>
<feature type="repeat" description="WD 3">
    <location>
        <begin position="295"/>
        <end position="334"/>
    </location>
</feature>
<feature type="repeat" description="WD 4">
    <location>
        <begin position="342"/>
        <end position="393"/>
    </location>
</feature>
<feature type="region of interest" description="Disordered" evidence="4">
    <location>
        <begin position="547"/>
        <end position="566"/>
    </location>
</feature>
<feature type="region of interest" description="Disordered" evidence="4">
    <location>
        <begin position="604"/>
        <end position="632"/>
    </location>
</feature>
<feature type="region of interest" description="Disordered" evidence="4">
    <location>
        <begin position="673"/>
        <end position="745"/>
    </location>
</feature>
<feature type="region of interest" description="Disordered" evidence="4">
    <location>
        <begin position="787"/>
        <end position="817"/>
    </location>
</feature>
<feature type="region of interest" description="Disordered" evidence="4">
    <location>
        <begin position="875"/>
        <end position="951"/>
    </location>
</feature>
<feature type="coiled-coil region" evidence="3">
    <location>
        <begin position="972"/>
        <end position="1031"/>
    </location>
</feature>
<feature type="compositionally biased region" description="Low complexity" evidence="4">
    <location>
        <begin position="609"/>
        <end position="632"/>
    </location>
</feature>
<feature type="compositionally biased region" description="Low complexity" evidence="4">
    <location>
        <begin position="673"/>
        <end position="693"/>
    </location>
</feature>
<feature type="compositionally biased region" description="Polar residues" evidence="4">
    <location>
        <begin position="727"/>
        <end position="745"/>
    </location>
</feature>
<feature type="modified residue" description="N-acetylalanine" evidence="2">
    <location>
        <position position="2"/>
    </location>
</feature>
<feature type="modified residue" description="Phosphoserine" evidence="2">
    <location>
        <position position="3"/>
    </location>
</feature>
<feature type="modified residue" description="Phosphoserine" evidence="2">
    <location>
        <position position="6"/>
    </location>
</feature>
<feature type="modified residue" description="N6-acetyllysine" evidence="2">
    <location>
        <position position="125"/>
    </location>
</feature>
<feature type="modified residue" description="Phosphoserine" evidence="2">
    <location>
        <position position="560"/>
    </location>
</feature>
<feature type="modified residue" description="Phosphoserine" evidence="2">
    <location>
        <position position="565"/>
    </location>
</feature>
<feature type="modified residue" description="Phosphoserine" evidence="2">
    <location>
        <position position="583"/>
    </location>
</feature>
<feature type="modified residue" description="Phosphoserine" evidence="2">
    <location>
        <position position="585"/>
    </location>
</feature>
<feature type="modified residue" description="Phosphoserine" evidence="1">
    <location>
        <position position="681"/>
    </location>
</feature>
<feature type="modified residue" description="Phosphoserine" evidence="2">
    <location>
        <position position="713"/>
    </location>
</feature>
<feature type="modified residue" description="Phosphoserine" evidence="2">
    <location>
        <position position="728"/>
    </location>
</feature>
<feature type="modified residue" description="Phosphoserine" evidence="2">
    <location>
        <position position="730"/>
    </location>
</feature>
<feature type="modified residue" description="Phosphothreonine" evidence="2">
    <location>
        <position position="732"/>
    </location>
</feature>
<feature type="modified residue" description="Phosphoserine" evidence="6">
    <location>
        <position position="734"/>
    </location>
</feature>
<feature type="modified residue" description="Phosphoserine" evidence="2">
    <location>
        <position position="746"/>
    </location>
</feature>
<feature type="modified residue" description="Phosphothreonine" evidence="2">
    <location>
        <position position="827"/>
    </location>
</feature>
<feature type="modified residue" description="Phosphoserine" evidence="6">
    <location>
        <position position="850"/>
    </location>
</feature>
<feature type="modified residue" description="Phosphoserine" evidence="2">
    <location>
        <position position="877"/>
    </location>
</feature>
<feature type="modified residue" description="Phosphothreonine" evidence="1">
    <location>
        <position position="880"/>
    </location>
</feature>
<feature type="modified residue" description="Phosphoserine" evidence="2">
    <location>
        <position position="881"/>
    </location>
</feature>
<feature type="modified residue" description="Phosphoserine" evidence="2">
    <location>
        <position position="885"/>
    </location>
</feature>
<feature type="modified residue" description="Phosphoserine" evidence="1">
    <location>
        <position position="893"/>
    </location>
</feature>
<feature type="modified residue" description="Phosphoserine" evidence="1">
    <location>
        <position position="896"/>
    </location>
</feature>
<feature type="modified residue" description="Phosphoserine" evidence="2">
    <location>
        <position position="898"/>
    </location>
</feature>
<feature type="modified residue" description="Phosphothreonine" evidence="1">
    <location>
        <position position="907"/>
    </location>
</feature>
<feature type="modified residue" description="Phosphoserine" evidence="2">
    <location>
        <position position="1386"/>
    </location>
</feature>
<comment type="function">
    <text evidence="2">In the process of mRNA degradation, seems to play a role in mRNA decapping. Component of a complex containing DCP2 and DCP1A which functions in decapping of ARE-containing mRNAs. Promotes complex formation between DCP1A and DCP2. Enhances the catalytic activity of DCP2 (in vitro).</text>
</comment>
<comment type="subunit">
    <text evidence="1 2">Part of a decapping complex consisting of DCP1A, DCP2, EDC3, EDC4 and probably DDX6. Part of a complex consisting of DCP1A, EDC3, EDC4 and DDX6. Part of a complex consisting of DCP1B, EDC3, EDC4 and DDX6. Interacts with DCP2. Interacts with NBDY. Interacts with Tex19.1 (By similarity). Interacts with LSM14A (By similarity). Interacts with DDX6 (By similarity).</text>
</comment>
<comment type="subcellular location">
    <subcellularLocation>
        <location evidence="2">Cytoplasm</location>
        <location evidence="2">P-body</location>
    </subcellularLocation>
    <subcellularLocation>
        <location evidence="2">Nucleus</location>
    </subcellularLocation>
</comment>
<comment type="similarity">
    <text evidence="5">Belongs to the WD repeat EDC4 family.</text>
</comment>